<evidence type="ECO:0000255" key="1">
    <source>
        <dbReference type="HAMAP-Rule" id="MF_00634"/>
    </source>
</evidence>
<feature type="chain" id="PRO_1000130673" description="UPF0235 protein Cphamn1_2066">
    <location>
        <begin position="1"/>
        <end position="101"/>
    </location>
</feature>
<organism>
    <name type="scientific">Chlorobium phaeobacteroides (strain BS1)</name>
    <dbReference type="NCBI Taxonomy" id="331678"/>
    <lineage>
        <taxon>Bacteria</taxon>
        <taxon>Pseudomonadati</taxon>
        <taxon>Chlorobiota</taxon>
        <taxon>Chlorobiia</taxon>
        <taxon>Chlorobiales</taxon>
        <taxon>Chlorobiaceae</taxon>
        <taxon>Chlorobium/Pelodictyon group</taxon>
        <taxon>Chlorobium</taxon>
    </lineage>
</organism>
<accession>B3EMY7</accession>
<comment type="similarity">
    <text evidence="1">Belongs to the UPF0235 family.</text>
</comment>
<name>Y2066_CHLPB</name>
<gene>
    <name type="ordered locus">Cphamn1_2066</name>
</gene>
<reference key="1">
    <citation type="submission" date="2008-06" db="EMBL/GenBank/DDBJ databases">
        <title>Complete sequence of Chlorobium phaeobacteroides BS1.</title>
        <authorList>
            <consortium name="US DOE Joint Genome Institute"/>
            <person name="Lucas S."/>
            <person name="Copeland A."/>
            <person name="Lapidus A."/>
            <person name="Glavina del Rio T."/>
            <person name="Dalin E."/>
            <person name="Tice H."/>
            <person name="Bruce D."/>
            <person name="Goodwin L."/>
            <person name="Pitluck S."/>
            <person name="Schmutz J."/>
            <person name="Larimer F."/>
            <person name="Land M."/>
            <person name="Hauser L."/>
            <person name="Kyrpides N."/>
            <person name="Ovchinnikova G."/>
            <person name="Li T."/>
            <person name="Liu Z."/>
            <person name="Zhao F."/>
            <person name="Overmann J."/>
            <person name="Bryant D.A."/>
            <person name="Richardson P."/>
        </authorList>
    </citation>
    <scope>NUCLEOTIDE SEQUENCE [LARGE SCALE GENOMIC DNA]</scope>
    <source>
        <strain>BS1</strain>
    </source>
</reference>
<sequence length="101" mass="10986">MLQVQEKAGSVFFSIKAQPRSSKSMITGEYDGSIKVNLKAPPVDGEANLECCRLLARTLGVARSSVEIVSGTRGKMKRVKVFGLSAVEFTEKITPYLYSSP</sequence>
<proteinExistence type="inferred from homology"/>
<dbReference type="EMBL" id="CP001101">
    <property type="protein sequence ID" value="ACE04976.1"/>
    <property type="molecule type" value="Genomic_DNA"/>
</dbReference>
<dbReference type="SMR" id="B3EMY7"/>
<dbReference type="STRING" id="331678.Cphamn1_2066"/>
<dbReference type="KEGG" id="cpb:Cphamn1_2066"/>
<dbReference type="eggNOG" id="COG1872">
    <property type="taxonomic scope" value="Bacteria"/>
</dbReference>
<dbReference type="HOGENOM" id="CLU_130694_6_0_10"/>
<dbReference type="OrthoDB" id="9800587at2"/>
<dbReference type="GO" id="GO:0005737">
    <property type="term" value="C:cytoplasm"/>
    <property type="evidence" value="ECO:0007669"/>
    <property type="project" value="TreeGrafter"/>
</dbReference>
<dbReference type="Gene3D" id="3.30.1200.10">
    <property type="entry name" value="YggU-like"/>
    <property type="match status" value="1"/>
</dbReference>
<dbReference type="HAMAP" id="MF_00634">
    <property type="entry name" value="UPF0235"/>
    <property type="match status" value="1"/>
</dbReference>
<dbReference type="InterPro" id="IPR003746">
    <property type="entry name" value="DUF167"/>
</dbReference>
<dbReference type="InterPro" id="IPR036591">
    <property type="entry name" value="YggU-like_sf"/>
</dbReference>
<dbReference type="NCBIfam" id="TIGR00251">
    <property type="entry name" value="DUF167 family protein"/>
    <property type="match status" value="1"/>
</dbReference>
<dbReference type="PANTHER" id="PTHR13420">
    <property type="entry name" value="UPF0235 PROTEIN C15ORF40"/>
    <property type="match status" value="1"/>
</dbReference>
<dbReference type="PANTHER" id="PTHR13420:SF7">
    <property type="entry name" value="UPF0235 PROTEIN C15ORF40"/>
    <property type="match status" value="1"/>
</dbReference>
<dbReference type="Pfam" id="PF02594">
    <property type="entry name" value="DUF167"/>
    <property type="match status" value="1"/>
</dbReference>
<dbReference type="SMART" id="SM01152">
    <property type="entry name" value="DUF167"/>
    <property type="match status" value="1"/>
</dbReference>
<dbReference type="SUPFAM" id="SSF69786">
    <property type="entry name" value="YggU-like"/>
    <property type="match status" value="1"/>
</dbReference>
<protein>
    <recommendedName>
        <fullName evidence="1">UPF0235 protein Cphamn1_2066</fullName>
    </recommendedName>
</protein>